<dbReference type="EMBL" id="AF148805">
    <property type="protein sequence ID" value="ABD28885.1"/>
    <property type="molecule type" value="Genomic_DNA"/>
</dbReference>
<dbReference type="RefSeq" id="YP_001129387.1">
    <property type="nucleotide sequence ID" value="NC_009333.1"/>
</dbReference>
<dbReference type="BioGRID" id="1777007">
    <property type="interactions" value="3"/>
</dbReference>
<dbReference type="DNASU" id="4961504"/>
<dbReference type="GeneID" id="4961504"/>
<dbReference type="KEGG" id="vg:4961504"/>
<dbReference type="Proteomes" id="UP000000942">
    <property type="component" value="Segment"/>
</dbReference>
<dbReference type="GO" id="GO:0042025">
    <property type="term" value="C:host cell nucleus"/>
    <property type="evidence" value="ECO:0007669"/>
    <property type="project" value="UniProtKB-SubCell"/>
</dbReference>
<dbReference type="InterPro" id="IPR004280">
    <property type="entry name" value="Herpes_UL95"/>
</dbReference>
<dbReference type="Pfam" id="PF03038">
    <property type="entry name" value="Herpes_UL95"/>
    <property type="match status" value="1"/>
</dbReference>
<proteinExistence type="evidence at protein level"/>
<gene>
    <name type="primary">ORF34</name>
</gene>
<organismHost>
    <name type="scientific">Homo sapiens</name>
    <name type="common">Human</name>
    <dbReference type="NCBI Taxonomy" id="9606"/>
</organismHost>
<comment type="function">
    <text evidence="2 3 4 5">Participates in the expression of late viral mRNAs in part by interacting with ORF24 (PubMed:25810551, PubMed:26468530). Expressed before viral DNA replication, assembles at the viral pre-replication complexes (pre-RCs) and thus serves as a hub for recruiting a viral transcription complex to ORF24 to promote late viral gene expression (PubMed:28336944). Also plays a regulatory role in the viral life cycle by regulating host transcriptional regulators HIF1A and EPAS1 (PubMed:31189709).</text>
</comment>
<comment type="subunit">
    <text evidence="1 2 3 4 5">Interacts with ORF24; this interaction may serve as a core scaffold for the assembly of the viral transcription initiation complex (PubMed:26468530, PubMed:28336944). Interacts with ORF66 (PubMed:28336944, PubMed:31578296). Interacts with ORF18 (PubMed:28336944). Interacts with ORF23 (PubMed:28336944). Interacts with ORF31 (PubMed:25810551, PubMed:28336944). Interacts with host EPAS1; this interaction stabilizes host EPAS1, ensuring its transcriptional activity (PubMed:31189709).</text>
</comment>
<comment type="subcellular location">
    <subcellularLocation>
        <location evidence="3">Host nucleus</location>
    </subcellularLocation>
    <text evidence="3">Recruited to nuclear replication compartments.</text>
</comment>
<comment type="disruption phenotype">
    <text evidence="3 4">Deletion results in reduced immediate early and early lytic gene expression and blocked late gene expression, while viral DNA replication seems not affected.</text>
</comment>
<comment type="similarity">
    <text evidence="6">Belongs to the herpesviridae UL95 family.</text>
</comment>
<accession>Q2HR98</accession>
<protein>
    <recommendedName>
        <fullName>Protein UL95 homolog</fullName>
    </recommendedName>
</protein>
<reference key="1">
    <citation type="journal article" date="1999" name="J. Virol.">
        <title>Identification of a spliced gene from Kaposi's sarcoma-associated herpesvirus encoding a protein with similarities to latent membrane proteins 1 and 2A of Epstein-Barr virus.</title>
        <authorList>
            <person name="Glenn M."/>
            <person name="Rainbow L."/>
            <person name="Aurade F."/>
            <person name="Davison A."/>
            <person name="Schulz T.F."/>
        </authorList>
    </citation>
    <scope>NUCLEOTIDE SEQUENCE [LARGE SCALE GENOMIC DNA]</scope>
</reference>
<reference key="2">
    <citation type="journal article" date="2006" name="J. Gen. Virol.">
        <title>Kaposi's sarcoma-associated herpesvirus immune modulation: an overview.</title>
        <authorList>
            <person name="Rezaee S.A.R."/>
            <person name="Cunningham C."/>
            <person name="Davison A.J."/>
            <person name="Blackbourn D.J."/>
        </authorList>
    </citation>
    <scope>NUCLEOTIDE SEQUENCE [LARGE SCALE GENOMIC DNA]</scope>
</reference>
<reference key="3">
    <citation type="journal article" date="2015" name="J. Virol.">
        <title>Association of Kaposi's Sarcoma-Associated Herpesvirus ORF31 with ORF34 and ORF24 Is Critical for Late Gene Expression.</title>
        <authorList>
            <person name="Brulois K."/>
            <person name="Wong L.Y."/>
            <person name="Lee H.R."/>
            <person name="Sivadas P."/>
            <person name="Ensser A."/>
            <person name="Feng P."/>
            <person name="Gao S.J."/>
            <person name="Toth Z."/>
            <person name="Jung J.U."/>
        </authorList>
    </citation>
    <scope>FUNCTION</scope>
    <scope>INTERACTION WITH ORF31</scope>
</reference>
<reference key="4">
    <citation type="journal article" date="2016" name="J. Virol.">
        <title>Interaction between ORF24 and ORF34 in the Kaposi's Sarcoma-Associated Herpesvirus Late Gene Transcription Factor Complex Is Essential for Viral Late Gene Expression.</title>
        <authorList>
            <person name="Davis Z.H."/>
            <person name="Hesser C.R."/>
            <person name="Park J."/>
            <person name="Glaunsinger B.A."/>
        </authorList>
    </citation>
    <scope>FUNCTION</scope>
    <scope>INTERACTION WITH ORF24</scope>
</reference>
<reference key="5">
    <citation type="journal article" date="2017" name="Sci. Rep.">
        <title>Kaposi's sarcoma-associated herpesvirus ORF34 is essential for late gene expression and virus production.</title>
        <authorList>
            <person name="Nishimura M."/>
            <person name="Watanabe T."/>
            <person name="Yagi S."/>
            <person name="Yamanaka T."/>
            <person name="Fujimuro M."/>
        </authorList>
    </citation>
    <scope>FUNCTION</scope>
    <scope>INTERACTION WITH ORF24; ORF31; ORF18; ORF23 AND ORF66</scope>
    <scope>SUBCELLULAR LOCATION</scope>
    <scope>DISRUPTION PHENOTYPE</scope>
</reference>
<reference key="6">
    <citation type="journal article" date="2019" name="J. Virol.">
        <title>The Kaposi's Sarcoma-Associated Herpesvirus ORF34 Protein Interacts and Stabilizes HIF-2alpha via Binding to the HIF-2alpha bHLH and PAS Domains.</title>
        <authorList>
            <person name="Haque M."/>
            <person name="Kousoulas K.G."/>
        </authorList>
    </citation>
    <scope>FUNCTION</scope>
    <scope>INTERACTION WITH HOST EPAS1</scope>
    <scope>DISRUPTION PHENOTYPE</scope>
</reference>
<reference key="7">
    <citation type="journal article" date="2020" name="J. Virol.">
        <title>Conserved CxnC Motifs in Kaposi's Sarcoma-Associated Herpesvirus ORF66 Are Required for Viral Late Gene Expression and Are Essential for Its Interaction with ORF34.</title>
        <authorList>
            <person name="Didychuk A.L."/>
            <person name="Castaneda A.F."/>
            <person name="Kushnir L.O."/>
            <person name="Huang C.J."/>
            <person name="Glaunsinger B.A."/>
        </authorList>
    </citation>
    <scope>FUNCTION</scope>
    <scope>INTERACTION WITH ORF66</scope>
</reference>
<sequence length="327" mass="36079">MFALSSLVSEGDPEVTSRYVKGVQLALDLSENTPGQFKLIETPLNSFLLVSNVMPEVQPICSGLPALRPDFSNLHLPRLEKLQRVLGQGFGAAGEEIALDPSHVETHEKGQVFYNHYATEEWTWALTLNKDALLREAVDGLCDPGTWKGLLPDDPLPLLWLLFNGPASFCRADCCLYKQHCGYPGPVLLPGHMYAPKRDLLSFVNHALKYTKFLYGDFSGTWAAACRPPFATSRIQRVVSQMKIIDASDTYISHTCLLCHIYQQNSIIAGQGTHVGGILLLSGKGTQYITGNVQTQRCPTTGDYLIIPSYDIPAIITMIKENGLNQL</sequence>
<organism>
    <name type="scientific">Human herpesvirus 8 type P (isolate GK18)</name>
    <name type="common">HHV-8</name>
    <name type="synonym">Kaposi's sarcoma-associated herpesvirus</name>
    <dbReference type="NCBI Taxonomy" id="868565"/>
    <lineage>
        <taxon>Viruses</taxon>
        <taxon>Duplodnaviria</taxon>
        <taxon>Heunggongvirae</taxon>
        <taxon>Peploviricota</taxon>
        <taxon>Herviviricetes</taxon>
        <taxon>Herpesvirales</taxon>
        <taxon>Orthoherpesviridae</taxon>
        <taxon>Gammaherpesvirinae</taxon>
        <taxon>Rhadinovirus</taxon>
        <taxon>Rhadinovirus humangamma8</taxon>
        <taxon>Human herpesvirus 8</taxon>
    </lineage>
</organism>
<evidence type="ECO:0000269" key="1">
    <source>
    </source>
</evidence>
<evidence type="ECO:0000269" key="2">
    <source>
    </source>
</evidence>
<evidence type="ECO:0000269" key="3">
    <source>
    </source>
</evidence>
<evidence type="ECO:0000269" key="4">
    <source>
    </source>
</evidence>
<evidence type="ECO:0000269" key="5">
    <source>
    </source>
</evidence>
<evidence type="ECO:0000305" key="6"/>
<name>UL95_HHV8P</name>
<keyword id="KW-1048">Host nucleus</keyword>
<keyword id="KW-1185">Reference proteome</keyword>
<feature type="chain" id="PRO_0000423808" description="Protein UL95 homolog">
    <location>
        <begin position="1"/>
        <end position="327"/>
    </location>
</feature>